<accession>Q0TKG8</accession>
<name>HTPG_ECOL5</name>
<sequence>MKGQETRGFQSEVKQLLHLMIHSLYSNKEIFLRELISNASDAADKLRFRALSNPDLYEGDGELRVRVSFDKDKRTLTISDNGVGMTRDEVIDHLGTIAKSGTKSFLESLGSDQAKDSQLIGQFGVGFYSAFIVADKVTVRTRAAGEKPENGVFWESAGEGEYTVADITKEDRGTEITLHLREGEDEFLDDWRVRSIISKYSDHIALPVEIEKREEKDGETVISWEKINKAQALWTRNKSEITDEEYKEFYKHIAHDFNDPLTWSHNRVEGKQEYTSLLYIPSQAPWDMWNRDHKHGLKLYVQRVFIMDDAEQFMPNYLRFVRGLIDSSDLPLNVSREILQDSTVTRNLRNALTKRVLQMLEKLAKDDAEKYQTFWQQFGLVLKEGPAEDFANQEAIAKLLRFASTHTDSSAQTVSLEDYVSRMKEGQEKIYYITADSYAAAKSSPHLELLRKKGIEVLLLSDRIDEWMMNYLTEFDGKPFQSVSKVDESLEKLADEVDESAKEAEKALTPFIDRVKALLGERVKDVRLTHRLTDTPAIVSTDADEMSTQMAKLFAAAGQKVPEVKYIFELNPDHVLVKRAADTEDEAKFSEWVELLLDQALLAERGTLEDPNLFIRRMNQLLVS</sequence>
<comment type="function">
    <text evidence="1">Molecular chaperone. Has ATPase activity.</text>
</comment>
<comment type="subunit">
    <text evidence="1">Homodimer.</text>
</comment>
<comment type="subcellular location">
    <subcellularLocation>
        <location evidence="1">Cytoplasm</location>
    </subcellularLocation>
</comment>
<comment type="similarity">
    <text evidence="1">Belongs to the heat shock protein 90 family.</text>
</comment>
<evidence type="ECO:0000255" key="1">
    <source>
        <dbReference type="HAMAP-Rule" id="MF_00505"/>
    </source>
</evidence>
<proteinExistence type="inferred from homology"/>
<keyword id="KW-0067">ATP-binding</keyword>
<keyword id="KW-0143">Chaperone</keyword>
<keyword id="KW-0963">Cytoplasm</keyword>
<keyword id="KW-0547">Nucleotide-binding</keyword>
<keyword id="KW-0346">Stress response</keyword>
<protein>
    <recommendedName>
        <fullName evidence="1">Chaperone protein HtpG</fullName>
    </recommendedName>
    <alternativeName>
        <fullName evidence="1">Heat shock protein HtpG</fullName>
    </alternativeName>
    <alternativeName>
        <fullName evidence="1">High temperature protein G</fullName>
    </alternativeName>
</protein>
<organism>
    <name type="scientific">Escherichia coli O6:K15:H31 (strain 536 / UPEC)</name>
    <dbReference type="NCBI Taxonomy" id="362663"/>
    <lineage>
        <taxon>Bacteria</taxon>
        <taxon>Pseudomonadati</taxon>
        <taxon>Pseudomonadota</taxon>
        <taxon>Gammaproteobacteria</taxon>
        <taxon>Enterobacterales</taxon>
        <taxon>Enterobacteriaceae</taxon>
        <taxon>Escherichia</taxon>
    </lineage>
</organism>
<reference key="1">
    <citation type="journal article" date="2006" name="Mol. Microbiol.">
        <title>Role of pathogenicity island-associated integrases in the genome plasticity of uropathogenic Escherichia coli strain 536.</title>
        <authorList>
            <person name="Hochhut B."/>
            <person name="Wilde C."/>
            <person name="Balling G."/>
            <person name="Middendorf B."/>
            <person name="Dobrindt U."/>
            <person name="Brzuszkiewicz E."/>
            <person name="Gottschalk G."/>
            <person name="Carniel E."/>
            <person name="Hacker J."/>
        </authorList>
    </citation>
    <scope>NUCLEOTIDE SEQUENCE [LARGE SCALE GENOMIC DNA]</scope>
    <source>
        <strain>536 / UPEC</strain>
    </source>
</reference>
<feature type="chain" id="PRO_0000258511" description="Chaperone protein HtpG">
    <location>
        <begin position="1"/>
        <end position="624"/>
    </location>
</feature>
<feature type="region of interest" description="A; substrate-binding" evidence="1">
    <location>
        <begin position="1"/>
        <end position="336"/>
    </location>
</feature>
<feature type="region of interest" description="B" evidence="1">
    <location>
        <begin position="337"/>
        <end position="552"/>
    </location>
</feature>
<feature type="region of interest" description="C" evidence="1">
    <location>
        <begin position="553"/>
        <end position="624"/>
    </location>
</feature>
<gene>
    <name evidence="1" type="primary">htpG</name>
    <name type="ordered locus">ECP_0534</name>
</gene>
<dbReference type="EMBL" id="CP000247">
    <property type="protein sequence ID" value="ABG68563.1"/>
    <property type="molecule type" value="Genomic_DNA"/>
</dbReference>
<dbReference type="RefSeq" id="WP_000678201.1">
    <property type="nucleotide sequence ID" value="NC_008253.1"/>
</dbReference>
<dbReference type="SMR" id="Q0TKG8"/>
<dbReference type="GeneID" id="93776977"/>
<dbReference type="KEGG" id="ecp:ECP_0534"/>
<dbReference type="HOGENOM" id="CLU_006684_3_0_6"/>
<dbReference type="Proteomes" id="UP000009182">
    <property type="component" value="Chromosome"/>
</dbReference>
<dbReference type="GO" id="GO:0005737">
    <property type="term" value="C:cytoplasm"/>
    <property type="evidence" value="ECO:0007669"/>
    <property type="project" value="UniProtKB-SubCell"/>
</dbReference>
<dbReference type="GO" id="GO:0005524">
    <property type="term" value="F:ATP binding"/>
    <property type="evidence" value="ECO:0007669"/>
    <property type="project" value="UniProtKB-UniRule"/>
</dbReference>
<dbReference type="GO" id="GO:0016887">
    <property type="term" value="F:ATP hydrolysis activity"/>
    <property type="evidence" value="ECO:0007669"/>
    <property type="project" value="InterPro"/>
</dbReference>
<dbReference type="GO" id="GO:0140662">
    <property type="term" value="F:ATP-dependent protein folding chaperone"/>
    <property type="evidence" value="ECO:0007669"/>
    <property type="project" value="InterPro"/>
</dbReference>
<dbReference type="GO" id="GO:0051082">
    <property type="term" value="F:unfolded protein binding"/>
    <property type="evidence" value="ECO:0007669"/>
    <property type="project" value="UniProtKB-UniRule"/>
</dbReference>
<dbReference type="CDD" id="cd16927">
    <property type="entry name" value="HATPase_Hsp90-like"/>
    <property type="match status" value="1"/>
</dbReference>
<dbReference type="FunFam" id="1.20.120.790:FF:000002">
    <property type="entry name" value="Molecular chaperone HtpG"/>
    <property type="match status" value="1"/>
</dbReference>
<dbReference type="FunFam" id="3.30.230.80:FF:000002">
    <property type="entry name" value="Molecular chaperone HtpG"/>
    <property type="match status" value="1"/>
</dbReference>
<dbReference type="FunFam" id="3.30.565.10:FF:000009">
    <property type="entry name" value="Molecular chaperone HtpG"/>
    <property type="match status" value="1"/>
</dbReference>
<dbReference type="FunFam" id="3.40.50.11260:FF:000002">
    <property type="entry name" value="Molecular chaperone HtpG"/>
    <property type="match status" value="1"/>
</dbReference>
<dbReference type="Gene3D" id="3.30.230.80">
    <property type="match status" value="1"/>
</dbReference>
<dbReference type="Gene3D" id="3.40.50.11260">
    <property type="match status" value="1"/>
</dbReference>
<dbReference type="Gene3D" id="1.20.120.790">
    <property type="entry name" value="Heat shock protein 90, C-terminal domain"/>
    <property type="match status" value="1"/>
</dbReference>
<dbReference type="Gene3D" id="3.30.565.10">
    <property type="entry name" value="Histidine kinase-like ATPase, C-terminal domain"/>
    <property type="match status" value="1"/>
</dbReference>
<dbReference type="HAMAP" id="MF_00505">
    <property type="entry name" value="HSP90"/>
    <property type="match status" value="1"/>
</dbReference>
<dbReference type="InterPro" id="IPR036890">
    <property type="entry name" value="HATPase_C_sf"/>
</dbReference>
<dbReference type="InterPro" id="IPR019805">
    <property type="entry name" value="Heat_shock_protein_90_CS"/>
</dbReference>
<dbReference type="InterPro" id="IPR037196">
    <property type="entry name" value="HSP90_C"/>
</dbReference>
<dbReference type="InterPro" id="IPR001404">
    <property type="entry name" value="Hsp90_fam"/>
</dbReference>
<dbReference type="InterPro" id="IPR020575">
    <property type="entry name" value="Hsp90_N"/>
</dbReference>
<dbReference type="InterPro" id="IPR020568">
    <property type="entry name" value="Ribosomal_Su5_D2-typ_SF"/>
</dbReference>
<dbReference type="NCBIfam" id="NF003555">
    <property type="entry name" value="PRK05218.1"/>
    <property type="match status" value="1"/>
</dbReference>
<dbReference type="PANTHER" id="PTHR11528">
    <property type="entry name" value="HEAT SHOCK PROTEIN 90 FAMILY MEMBER"/>
    <property type="match status" value="1"/>
</dbReference>
<dbReference type="Pfam" id="PF13589">
    <property type="entry name" value="HATPase_c_3"/>
    <property type="match status" value="1"/>
</dbReference>
<dbReference type="Pfam" id="PF00183">
    <property type="entry name" value="HSP90"/>
    <property type="match status" value="1"/>
</dbReference>
<dbReference type="PIRSF" id="PIRSF002583">
    <property type="entry name" value="Hsp90"/>
    <property type="match status" value="1"/>
</dbReference>
<dbReference type="PRINTS" id="PR00775">
    <property type="entry name" value="HEATSHOCK90"/>
</dbReference>
<dbReference type="SMART" id="SM00387">
    <property type="entry name" value="HATPase_c"/>
    <property type="match status" value="1"/>
</dbReference>
<dbReference type="SUPFAM" id="SSF55874">
    <property type="entry name" value="ATPase domain of HSP90 chaperone/DNA topoisomerase II/histidine kinase"/>
    <property type="match status" value="1"/>
</dbReference>
<dbReference type="SUPFAM" id="SSF110942">
    <property type="entry name" value="HSP90 C-terminal domain"/>
    <property type="match status" value="1"/>
</dbReference>
<dbReference type="SUPFAM" id="SSF54211">
    <property type="entry name" value="Ribosomal protein S5 domain 2-like"/>
    <property type="match status" value="1"/>
</dbReference>
<dbReference type="PROSITE" id="PS00298">
    <property type="entry name" value="HSP90"/>
    <property type="match status" value="1"/>
</dbReference>